<name>PANC_FRATN</name>
<comment type="function">
    <text evidence="1">Catalyzes the condensation of pantoate with beta-alanine in an ATP-dependent reaction via a pantoyl-adenylate intermediate.</text>
</comment>
<comment type="catalytic activity">
    <reaction evidence="1">
        <text>(R)-pantoate + beta-alanine + ATP = (R)-pantothenate + AMP + diphosphate + H(+)</text>
        <dbReference type="Rhea" id="RHEA:10912"/>
        <dbReference type="ChEBI" id="CHEBI:15378"/>
        <dbReference type="ChEBI" id="CHEBI:15980"/>
        <dbReference type="ChEBI" id="CHEBI:29032"/>
        <dbReference type="ChEBI" id="CHEBI:30616"/>
        <dbReference type="ChEBI" id="CHEBI:33019"/>
        <dbReference type="ChEBI" id="CHEBI:57966"/>
        <dbReference type="ChEBI" id="CHEBI:456215"/>
        <dbReference type="EC" id="6.3.2.1"/>
    </reaction>
</comment>
<comment type="pathway">
    <text evidence="1">Cofactor biosynthesis; (R)-pantothenate biosynthesis; (R)-pantothenate from (R)-pantoate and beta-alanine: step 1/1.</text>
</comment>
<comment type="subunit">
    <text evidence="1">Homodimer.</text>
</comment>
<comment type="subcellular location">
    <subcellularLocation>
        <location evidence="1">Cytoplasm</location>
    </subcellularLocation>
</comment>
<comment type="miscellaneous">
    <text evidence="1">The reaction proceeds by a bi uni uni bi ping pong mechanism.</text>
</comment>
<comment type="similarity">
    <text evidence="1">Belongs to the pantothenate synthetase family.</text>
</comment>
<reference key="1">
    <citation type="journal article" date="2007" name="Genome Biol.">
        <title>Comparison of Francisella tularensis genomes reveals evolutionary events associated with the emergence of human pathogenic strains.</title>
        <authorList>
            <person name="Rohmer L."/>
            <person name="Fong C."/>
            <person name="Abmayr S."/>
            <person name="Wasnick M."/>
            <person name="Larson Freeman T.J."/>
            <person name="Radey M."/>
            <person name="Guina T."/>
            <person name="Svensson K."/>
            <person name="Hayden H.S."/>
            <person name="Jacobs M."/>
            <person name="Gallagher L.A."/>
            <person name="Manoil C."/>
            <person name="Ernst R.K."/>
            <person name="Drees B."/>
            <person name="Buckley D."/>
            <person name="Haugen E."/>
            <person name="Bovee D."/>
            <person name="Zhou Y."/>
            <person name="Chang J."/>
            <person name="Levy R."/>
            <person name="Lim R."/>
            <person name="Gillett W."/>
            <person name="Guenthener D."/>
            <person name="Kang A."/>
            <person name="Shaffer S.A."/>
            <person name="Taylor G."/>
            <person name="Chen J."/>
            <person name="Gallis B."/>
            <person name="D'Argenio D.A."/>
            <person name="Forsman M."/>
            <person name="Olson M.V."/>
            <person name="Goodlett D.R."/>
            <person name="Kaul R."/>
            <person name="Miller S.I."/>
            <person name="Brittnacher M.J."/>
        </authorList>
    </citation>
    <scope>NUCLEOTIDE SEQUENCE [LARGE SCALE GENOMIC DNA]</scope>
    <source>
        <strain>U112</strain>
    </source>
</reference>
<keyword id="KW-0067">ATP-binding</keyword>
<keyword id="KW-0963">Cytoplasm</keyword>
<keyword id="KW-0436">Ligase</keyword>
<keyword id="KW-0547">Nucleotide-binding</keyword>
<keyword id="KW-0566">Pantothenate biosynthesis</keyword>
<feature type="chain" id="PRO_0000305449" description="Pantothenate synthetase">
    <location>
        <begin position="1"/>
        <end position="261"/>
    </location>
</feature>
<feature type="active site" description="Proton donor" evidence="1">
    <location>
        <position position="36"/>
    </location>
</feature>
<feature type="binding site" evidence="1">
    <location>
        <begin position="29"/>
        <end position="36"/>
    </location>
    <ligand>
        <name>ATP</name>
        <dbReference type="ChEBI" id="CHEBI:30616"/>
    </ligand>
</feature>
<feature type="binding site" evidence="1">
    <location>
        <position position="60"/>
    </location>
    <ligand>
        <name>(R)-pantoate</name>
        <dbReference type="ChEBI" id="CHEBI:15980"/>
    </ligand>
</feature>
<feature type="binding site" evidence="1">
    <location>
        <position position="60"/>
    </location>
    <ligand>
        <name>beta-alanine</name>
        <dbReference type="ChEBI" id="CHEBI:57966"/>
    </ligand>
</feature>
<feature type="binding site" evidence="1">
    <location>
        <begin position="147"/>
        <end position="150"/>
    </location>
    <ligand>
        <name>ATP</name>
        <dbReference type="ChEBI" id="CHEBI:30616"/>
    </ligand>
</feature>
<feature type="binding site" evidence="1">
    <location>
        <position position="153"/>
    </location>
    <ligand>
        <name>(R)-pantoate</name>
        <dbReference type="ChEBI" id="CHEBI:15980"/>
    </ligand>
</feature>
<feature type="binding site" evidence="1">
    <location>
        <begin position="184"/>
        <end position="187"/>
    </location>
    <ligand>
        <name>ATP</name>
        <dbReference type="ChEBI" id="CHEBI:30616"/>
    </ligand>
</feature>
<gene>
    <name evidence="1" type="primary">panC</name>
    <name type="ordered locus">FTN_1353</name>
</gene>
<accession>A0Q7L3</accession>
<sequence>MIIADNIKQLHSIRNSLIKQQKIGFVPTMGALHNGHISLIKKAKSENDVVIVSIFVNPTQFNNPNDYQTYPNQLQQDIQILESLDVDVLFNPSEKDIYPDGNLLRIEPKLEIANILEGKSRPGHFSGMLTVVLKLLQITKPNNLYLGEKDYQQVMLIKQLVKDFFINTKIIVCPTQRQPSGLPLSSRNKNLTSTDIEIANKIYEILRQDDFSNLEELTNKINSAGAKLQYIQKLNNRIFLAFYIGKVRLIDNFLKETGPSC</sequence>
<proteinExistence type="inferred from homology"/>
<evidence type="ECO:0000255" key="1">
    <source>
        <dbReference type="HAMAP-Rule" id="MF_00158"/>
    </source>
</evidence>
<dbReference type="EC" id="6.3.2.1" evidence="1"/>
<dbReference type="EMBL" id="CP000439">
    <property type="protein sequence ID" value="ABK90228.1"/>
    <property type="molecule type" value="Genomic_DNA"/>
</dbReference>
<dbReference type="RefSeq" id="WP_003040203.1">
    <property type="nucleotide sequence ID" value="NC_008601.1"/>
</dbReference>
<dbReference type="SMR" id="A0Q7L3"/>
<dbReference type="KEGG" id="ftn:FTN_1353"/>
<dbReference type="KEGG" id="ftx:AW25_650"/>
<dbReference type="BioCyc" id="FTUL401614:G1G75-1398-MONOMER"/>
<dbReference type="UniPathway" id="UPA00028">
    <property type="reaction ID" value="UER00005"/>
</dbReference>
<dbReference type="Proteomes" id="UP000000762">
    <property type="component" value="Chromosome"/>
</dbReference>
<dbReference type="GO" id="GO:0005829">
    <property type="term" value="C:cytosol"/>
    <property type="evidence" value="ECO:0007669"/>
    <property type="project" value="TreeGrafter"/>
</dbReference>
<dbReference type="GO" id="GO:0005524">
    <property type="term" value="F:ATP binding"/>
    <property type="evidence" value="ECO:0007669"/>
    <property type="project" value="UniProtKB-KW"/>
</dbReference>
<dbReference type="GO" id="GO:0004592">
    <property type="term" value="F:pantoate-beta-alanine ligase activity"/>
    <property type="evidence" value="ECO:0007669"/>
    <property type="project" value="UniProtKB-UniRule"/>
</dbReference>
<dbReference type="GO" id="GO:0015940">
    <property type="term" value="P:pantothenate biosynthetic process"/>
    <property type="evidence" value="ECO:0007669"/>
    <property type="project" value="UniProtKB-UniRule"/>
</dbReference>
<dbReference type="Gene3D" id="3.40.50.620">
    <property type="entry name" value="HUPs"/>
    <property type="match status" value="1"/>
</dbReference>
<dbReference type="Gene3D" id="3.30.1300.10">
    <property type="entry name" value="Pantoate-beta-alanine ligase, C-terminal domain"/>
    <property type="match status" value="1"/>
</dbReference>
<dbReference type="HAMAP" id="MF_00158">
    <property type="entry name" value="PanC"/>
    <property type="match status" value="1"/>
</dbReference>
<dbReference type="InterPro" id="IPR004821">
    <property type="entry name" value="Cyt_trans-like"/>
</dbReference>
<dbReference type="InterPro" id="IPR003721">
    <property type="entry name" value="Pantoate_ligase"/>
</dbReference>
<dbReference type="InterPro" id="IPR042176">
    <property type="entry name" value="Pantoate_ligase_C"/>
</dbReference>
<dbReference type="InterPro" id="IPR014729">
    <property type="entry name" value="Rossmann-like_a/b/a_fold"/>
</dbReference>
<dbReference type="NCBIfam" id="TIGR00125">
    <property type="entry name" value="cyt_tran_rel"/>
    <property type="match status" value="1"/>
</dbReference>
<dbReference type="NCBIfam" id="TIGR00018">
    <property type="entry name" value="panC"/>
    <property type="match status" value="1"/>
</dbReference>
<dbReference type="PANTHER" id="PTHR21299">
    <property type="entry name" value="CYTIDYLATE KINASE/PANTOATE-BETA-ALANINE LIGASE"/>
    <property type="match status" value="1"/>
</dbReference>
<dbReference type="PANTHER" id="PTHR21299:SF1">
    <property type="entry name" value="PANTOATE--BETA-ALANINE LIGASE"/>
    <property type="match status" value="1"/>
</dbReference>
<dbReference type="Pfam" id="PF02569">
    <property type="entry name" value="Pantoate_ligase"/>
    <property type="match status" value="1"/>
</dbReference>
<dbReference type="SUPFAM" id="SSF52374">
    <property type="entry name" value="Nucleotidylyl transferase"/>
    <property type="match status" value="1"/>
</dbReference>
<organism>
    <name type="scientific">Francisella tularensis subsp. novicida (strain U112)</name>
    <dbReference type="NCBI Taxonomy" id="401614"/>
    <lineage>
        <taxon>Bacteria</taxon>
        <taxon>Pseudomonadati</taxon>
        <taxon>Pseudomonadota</taxon>
        <taxon>Gammaproteobacteria</taxon>
        <taxon>Thiotrichales</taxon>
        <taxon>Francisellaceae</taxon>
        <taxon>Francisella</taxon>
    </lineage>
</organism>
<protein>
    <recommendedName>
        <fullName evidence="1">Pantothenate synthetase</fullName>
        <shortName evidence="1">PS</shortName>
        <ecNumber evidence="1">6.3.2.1</ecNumber>
    </recommendedName>
    <alternativeName>
        <fullName evidence="1">Pantoate--beta-alanine ligase</fullName>
    </alternativeName>
    <alternativeName>
        <fullName evidence="1">Pantoate-activating enzyme</fullName>
    </alternativeName>
</protein>